<proteinExistence type="evidence at protein level"/>
<feature type="chain" id="PRO_0000111188" description="Small ribosomal subunit protein bS18">
    <location>
        <begin position="1"/>
        <end position="104"/>
    </location>
</feature>
<feature type="region of interest" description="Disordered" evidence="2">
    <location>
        <begin position="1"/>
        <end position="25"/>
    </location>
</feature>
<feature type="compositionally biased region" description="Basic and acidic residues" evidence="2">
    <location>
        <begin position="1"/>
        <end position="14"/>
    </location>
</feature>
<feature type="helix" evidence="4">
    <location>
        <begin position="42"/>
        <end position="46"/>
    </location>
</feature>
<feature type="turn" evidence="4">
    <location>
        <begin position="53"/>
        <end position="55"/>
    </location>
</feature>
<feature type="helix" evidence="4">
    <location>
        <begin position="57"/>
        <end position="63"/>
    </location>
</feature>
<feature type="helix" evidence="4">
    <location>
        <begin position="73"/>
        <end position="76"/>
    </location>
</feature>
<feature type="helix" evidence="4">
    <location>
        <begin position="80"/>
        <end position="95"/>
    </location>
</feature>
<dbReference type="EMBL" id="U00089">
    <property type="protein sequence ID" value="AAB96249.1"/>
    <property type="molecule type" value="Genomic_DNA"/>
</dbReference>
<dbReference type="PIR" id="S73927">
    <property type="entry name" value="S73927"/>
</dbReference>
<dbReference type="RefSeq" id="NP_109918.1">
    <property type="nucleotide sequence ID" value="NC_000912.1"/>
</dbReference>
<dbReference type="RefSeq" id="WP_010874587.1">
    <property type="nucleotide sequence ID" value="NZ_OU342337.1"/>
</dbReference>
<dbReference type="PDB" id="7OOC">
    <property type="method" value="EM"/>
    <property type="resolution" value="3.70 A"/>
    <property type="chains" value="Q=1-104"/>
</dbReference>
<dbReference type="PDB" id="7P6Z">
    <property type="method" value="EM"/>
    <property type="resolution" value="3.50 A"/>
    <property type="chains" value="Q=1-104"/>
</dbReference>
<dbReference type="PDB" id="7PAH">
    <property type="method" value="EM"/>
    <property type="resolution" value="9.50 A"/>
    <property type="chains" value="Q=1-104"/>
</dbReference>
<dbReference type="PDB" id="7PAI">
    <property type="method" value="EM"/>
    <property type="resolution" value="6.70 A"/>
    <property type="chains" value="Q=1-104"/>
</dbReference>
<dbReference type="PDB" id="7PAJ">
    <property type="method" value="EM"/>
    <property type="resolution" value="7.30 A"/>
    <property type="chains" value="Q=1-104"/>
</dbReference>
<dbReference type="PDB" id="7PAK">
    <property type="method" value="EM"/>
    <property type="resolution" value="5.30 A"/>
    <property type="chains" value="Q=1-104"/>
</dbReference>
<dbReference type="PDB" id="7PAL">
    <property type="method" value="EM"/>
    <property type="resolution" value="4.70 A"/>
    <property type="chains" value="Q=1-104"/>
</dbReference>
<dbReference type="PDB" id="7PAM">
    <property type="method" value="EM"/>
    <property type="resolution" value="6.80 A"/>
    <property type="chains" value="Q=1-104"/>
</dbReference>
<dbReference type="PDB" id="7PAN">
    <property type="method" value="EM"/>
    <property type="resolution" value="9.70 A"/>
    <property type="chains" value="Q=1-104"/>
</dbReference>
<dbReference type="PDB" id="7PAO">
    <property type="method" value="EM"/>
    <property type="resolution" value="7.00 A"/>
    <property type="chains" value="Q=1-104"/>
</dbReference>
<dbReference type="PDB" id="7PAQ">
    <property type="method" value="EM"/>
    <property type="resolution" value="8.90 A"/>
    <property type="chains" value="Q=1-104"/>
</dbReference>
<dbReference type="PDB" id="7PAR">
    <property type="method" value="EM"/>
    <property type="resolution" value="8.20 A"/>
    <property type="chains" value="Q=1-104"/>
</dbReference>
<dbReference type="PDB" id="7PAS">
    <property type="method" value="EM"/>
    <property type="resolution" value="16.00 A"/>
    <property type="chains" value="Q=1-104"/>
</dbReference>
<dbReference type="PDB" id="7PH9">
    <property type="method" value="EM"/>
    <property type="resolution" value="8.70 A"/>
    <property type="chains" value="Q=1-104"/>
</dbReference>
<dbReference type="PDB" id="7PHA">
    <property type="method" value="EM"/>
    <property type="resolution" value="8.50 A"/>
    <property type="chains" value="Q=1-104"/>
</dbReference>
<dbReference type="PDB" id="7PHB">
    <property type="method" value="EM"/>
    <property type="resolution" value="4.90 A"/>
    <property type="chains" value="Q=1-104"/>
</dbReference>
<dbReference type="PDB" id="7PHC">
    <property type="method" value="EM"/>
    <property type="resolution" value="9.90 A"/>
    <property type="chains" value="Q=1-104"/>
</dbReference>
<dbReference type="PDB" id="7PI8">
    <property type="method" value="EM"/>
    <property type="resolution" value="8.90 A"/>
    <property type="chains" value="Q=1-104"/>
</dbReference>
<dbReference type="PDB" id="7PI9">
    <property type="method" value="EM"/>
    <property type="resolution" value="6.30 A"/>
    <property type="chains" value="Q=1-104"/>
</dbReference>
<dbReference type="PDB" id="7PIA">
    <property type="method" value="EM"/>
    <property type="resolution" value="13.60 A"/>
    <property type="chains" value="Q=1-104"/>
</dbReference>
<dbReference type="PDB" id="7PIB">
    <property type="method" value="EM"/>
    <property type="resolution" value="4.70 A"/>
    <property type="chains" value="Q=1-104"/>
</dbReference>
<dbReference type="PDB" id="7PIC">
    <property type="method" value="EM"/>
    <property type="resolution" value="9.10 A"/>
    <property type="chains" value="Q=1-104"/>
</dbReference>
<dbReference type="PDB" id="7PIO">
    <property type="method" value="EM"/>
    <property type="resolution" value="9.50 A"/>
    <property type="chains" value="Q=1-104"/>
</dbReference>
<dbReference type="PDB" id="7PIP">
    <property type="method" value="EM"/>
    <property type="resolution" value="9.30 A"/>
    <property type="chains" value="Q=1-104"/>
</dbReference>
<dbReference type="PDB" id="7PIQ">
    <property type="method" value="EM"/>
    <property type="resolution" value="9.70 A"/>
    <property type="chains" value="Q=1-104"/>
</dbReference>
<dbReference type="PDB" id="7PIR">
    <property type="method" value="EM"/>
    <property type="resolution" value="12.10 A"/>
    <property type="chains" value="Q=1-104"/>
</dbReference>
<dbReference type="PDB" id="7PIS">
    <property type="method" value="EM"/>
    <property type="resolution" value="15.00 A"/>
    <property type="chains" value="Q=1-104"/>
</dbReference>
<dbReference type="PDB" id="7PIT">
    <property type="method" value="EM"/>
    <property type="resolution" value="5.70 A"/>
    <property type="chains" value="Q=1-104"/>
</dbReference>
<dbReference type="PDB" id="8P6P">
    <property type="method" value="EM"/>
    <property type="resolution" value="3.20 A"/>
    <property type="chains" value="Q=1-104"/>
</dbReference>
<dbReference type="PDB" id="8P7X">
    <property type="method" value="EM"/>
    <property type="resolution" value="3.03 A"/>
    <property type="chains" value="Q=1-104"/>
</dbReference>
<dbReference type="PDB" id="8P7Y">
    <property type="method" value="EM"/>
    <property type="resolution" value="3.70 A"/>
    <property type="chains" value="Q=1-104"/>
</dbReference>
<dbReference type="PDB" id="8P8V">
    <property type="method" value="EM"/>
    <property type="resolution" value="8.70 A"/>
    <property type="chains" value="Q=1-104"/>
</dbReference>
<dbReference type="PDB" id="8P8W">
    <property type="method" value="EM"/>
    <property type="resolution" value="8.70 A"/>
    <property type="chains" value="Q=1-104"/>
</dbReference>
<dbReference type="PDBsum" id="7OOC"/>
<dbReference type="PDBsum" id="7P6Z"/>
<dbReference type="PDBsum" id="7PAH"/>
<dbReference type="PDBsum" id="7PAI"/>
<dbReference type="PDBsum" id="7PAJ"/>
<dbReference type="PDBsum" id="7PAK"/>
<dbReference type="PDBsum" id="7PAL"/>
<dbReference type="PDBsum" id="7PAM"/>
<dbReference type="PDBsum" id="7PAN"/>
<dbReference type="PDBsum" id="7PAO"/>
<dbReference type="PDBsum" id="7PAQ"/>
<dbReference type="PDBsum" id="7PAR"/>
<dbReference type="PDBsum" id="7PAS"/>
<dbReference type="PDBsum" id="7PH9"/>
<dbReference type="PDBsum" id="7PHA"/>
<dbReference type="PDBsum" id="7PHB"/>
<dbReference type="PDBsum" id="7PHC"/>
<dbReference type="PDBsum" id="7PI8"/>
<dbReference type="PDBsum" id="7PI9"/>
<dbReference type="PDBsum" id="7PIA"/>
<dbReference type="PDBsum" id="7PIB"/>
<dbReference type="PDBsum" id="7PIC"/>
<dbReference type="PDBsum" id="7PIO"/>
<dbReference type="PDBsum" id="7PIP"/>
<dbReference type="PDBsum" id="7PIQ"/>
<dbReference type="PDBsum" id="7PIR"/>
<dbReference type="PDBsum" id="7PIS"/>
<dbReference type="PDBsum" id="7PIT"/>
<dbReference type="PDBsum" id="8P6P"/>
<dbReference type="PDBsum" id="8P7X"/>
<dbReference type="PDBsum" id="8P7Y"/>
<dbReference type="PDBsum" id="8P8V"/>
<dbReference type="PDBsum" id="8P8W"/>
<dbReference type="EMDB" id="EMD-13234"/>
<dbReference type="EMDB" id="EMD-13272"/>
<dbReference type="EMDB" id="EMD-13273"/>
<dbReference type="EMDB" id="EMD-13274"/>
<dbReference type="EMDB" id="EMD-13275"/>
<dbReference type="EMDB" id="EMD-13276"/>
<dbReference type="EMDB" id="EMD-13277"/>
<dbReference type="EMDB" id="EMD-13278"/>
<dbReference type="EMDB" id="EMD-13279"/>
<dbReference type="EMDB" id="EMD-13280"/>
<dbReference type="EMDB" id="EMD-13281"/>
<dbReference type="EMDB" id="EMD-13282"/>
<dbReference type="EMDB" id="EMD-13410"/>
<dbReference type="EMDB" id="EMD-13411"/>
<dbReference type="EMDB" id="EMD-13412"/>
<dbReference type="EMDB" id="EMD-13413"/>
<dbReference type="EMDB" id="EMD-13432"/>
<dbReference type="EMDB" id="EMD-13433"/>
<dbReference type="EMDB" id="EMD-13434"/>
<dbReference type="EMDB" id="EMD-13435"/>
<dbReference type="EMDB" id="EMD-13436"/>
<dbReference type="EMDB" id="EMD-13445"/>
<dbReference type="EMDB" id="EMD-13446"/>
<dbReference type="EMDB" id="EMD-13447"/>
<dbReference type="EMDB" id="EMD-13448"/>
<dbReference type="EMDB" id="EMD-13449"/>
<dbReference type="EMDB" id="EMD-13450"/>
<dbReference type="SMR" id="P75541"/>
<dbReference type="IntAct" id="P75541">
    <property type="interactions" value="6"/>
</dbReference>
<dbReference type="STRING" id="272634.MPN_230"/>
<dbReference type="EnsemblBacteria" id="AAB96249">
    <property type="protein sequence ID" value="AAB96249"/>
    <property type="gene ID" value="MPN_230"/>
</dbReference>
<dbReference type="GeneID" id="66609124"/>
<dbReference type="KEGG" id="mpn:MPN_230"/>
<dbReference type="PATRIC" id="fig|272634.6.peg.249"/>
<dbReference type="HOGENOM" id="CLU_148710_0_1_14"/>
<dbReference type="OrthoDB" id="9812008at2"/>
<dbReference type="BioCyc" id="MPNE272634:G1GJ3-368-MONOMER"/>
<dbReference type="Proteomes" id="UP000000808">
    <property type="component" value="Chromosome"/>
</dbReference>
<dbReference type="GO" id="GO:0022627">
    <property type="term" value="C:cytosolic small ribosomal subunit"/>
    <property type="evidence" value="ECO:0007669"/>
    <property type="project" value="TreeGrafter"/>
</dbReference>
<dbReference type="GO" id="GO:0070181">
    <property type="term" value="F:small ribosomal subunit rRNA binding"/>
    <property type="evidence" value="ECO:0007669"/>
    <property type="project" value="TreeGrafter"/>
</dbReference>
<dbReference type="GO" id="GO:0003735">
    <property type="term" value="F:structural constituent of ribosome"/>
    <property type="evidence" value="ECO:0007669"/>
    <property type="project" value="InterPro"/>
</dbReference>
<dbReference type="GO" id="GO:0006412">
    <property type="term" value="P:translation"/>
    <property type="evidence" value="ECO:0007669"/>
    <property type="project" value="UniProtKB-UniRule"/>
</dbReference>
<dbReference type="Gene3D" id="4.10.640.10">
    <property type="entry name" value="Ribosomal protein S18"/>
    <property type="match status" value="1"/>
</dbReference>
<dbReference type="HAMAP" id="MF_00270">
    <property type="entry name" value="Ribosomal_bS18"/>
    <property type="match status" value="1"/>
</dbReference>
<dbReference type="InterPro" id="IPR001648">
    <property type="entry name" value="Ribosomal_bS18"/>
</dbReference>
<dbReference type="InterPro" id="IPR018275">
    <property type="entry name" value="Ribosomal_bS18_CS"/>
</dbReference>
<dbReference type="InterPro" id="IPR036870">
    <property type="entry name" value="Ribosomal_bS18_sf"/>
</dbReference>
<dbReference type="NCBIfam" id="TIGR00165">
    <property type="entry name" value="S18"/>
    <property type="match status" value="1"/>
</dbReference>
<dbReference type="PANTHER" id="PTHR13479">
    <property type="entry name" value="30S RIBOSOMAL PROTEIN S18"/>
    <property type="match status" value="1"/>
</dbReference>
<dbReference type="PANTHER" id="PTHR13479:SF40">
    <property type="entry name" value="SMALL RIBOSOMAL SUBUNIT PROTEIN BS18M"/>
    <property type="match status" value="1"/>
</dbReference>
<dbReference type="Pfam" id="PF01084">
    <property type="entry name" value="Ribosomal_S18"/>
    <property type="match status" value="1"/>
</dbReference>
<dbReference type="PRINTS" id="PR00974">
    <property type="entry name" value="RIBOSOMALS18"/>
</dbReference>
<dbReference type="SUPFAM" id="SSF46911">
    <property type="entry name" value="Ribosomal protein S18"/>
    <property type="match status" value="1"/>
</dbReference>
<dbReference type="PROSITE" id="PS00057">
    <property type="entry name" value="RIBOSOMAL_S18"/>
    <property type="match status" value="1"/>
</dbReference>
<keyword id="KW-0002">3D-structure</keyword>
<keyword id="KW-1185">Reference proteome</keyword>
<keyword id="KW-0687">Ribonucleoprotein</keyword>
<keyword id="KW-0689">Ribosomal protein</keyword>
<keyword id="KW-0694">RNA-binding</keyword>
<keyword id="KW-0699">rRNA-binding</keyword>
<comment type="function">
    <text evidence="1">Binds as a heterodimer with protein bS6 to the central domain of the 16S rRNA, where it helps stabilize the platform of the 30S subunit.</text>
</comment>
<comment type="subunit">
    <text evidence="1">Part of the 30S ribosomal subunit. Forms a tight heterodimer with protein bS6.</text>
</comment>
<comment type="similarity">
    <text evidence="1">Belongs to the bacterial ribosomal protein bS18 family.</text>
</comment>
<sequence>MMNNEHDNFQKEVETTTETTFNREEGKRMVRPLFKRSKKYCRFCAIGQLRIDLIDDLEALKRFLSPYAKINPRRITGNCQMHQRHVAKALKRARYLALVPFVKD</sequence>
<accession>P75541</accession>
<protein>
    <recommendedName>
        <fullName evidence="1">Small ribosomal subunit protein bS18</fullName>
    </recommendedName>
    <alternativeName>
        <fullName evidence="3">30S ribosomal protein S18</fullName>
    </alternativeName>
</protein>
<reference key="1">
    <citation type="journal article" date="1996" name="Nucleic Acids Res.">
        <title>Complete sequence analysis of the genome of the bacterium Mycoplasma pneumoniae.</title>
        <authorList>
            <person name="Himmelreich R."/>
            <person name="Hilbert H."/>
            <person name="Plagens H."/>
            <person name="Pirkl E."/>
            <person name="Li B.-C."/>
            <person name="Herrmann R."/>
        </authorList>
    </citation>
    <scope>NUCLEOTIDE SEQUENCE [LARGE SCALE GENOMIC DNA]</scope>
    <source>
        <strain>ATCC 29342 / M129 / Subtype 1</strain>
    </source>
</reference>
<evidence type="ECO:0000255" key="1">
    <source>
        <dbReference type="HAMAP-Rule" id="MF_00270"/>
    </source>
</evidence>
<evidence type="ECO:0000256" key="2">
    <source>
        <dbReference type="SAM" id="MobiDB-lite"/>
    </source>
</evidence>
<evidence type="ECO:0000305" key="3"/>
<evidence type="ECO:0007829" key="4">
    <source>
        <dbReference type="PDB" id="8P6P"/>
    </source>
</evidence>
<gene>
    <name evidence="1" type="primary">rpsR</name>
    <name type="ordered locus">MPN_230</name>
    <name type="ORF">MP601</name>
</gene>
<organism>
    <name type="scientific">Mycoplasma pneumoniae (strain ATCC 29342 / M129 / Subtype 1)</name>
    <name type="common">Mycoplasmoides pneumoniae</name>
    <dbReference type="NCBI Taxonomy" id="272634"/>
    <lineage>
        <taxon>Bacteria</taxon>
        <taxon>Bacillati</taxon>
        <taxon>Mycoplasmatota</taxon>
        <taxon>Mycoplasmoidales</taxon>
        <taxon>Mycoplasmoidaceae</taxon>
        <taxon>Mycoplasmoides</taxon>
    </lineage>
</organism>
<name>RS18_MYCPN</name>